<accession>P0A2D8</accession>
<accession>O54427</accession>
<sequence length="513" mass="57680">MRLEVFCEDRLGLTRELLDLLVLRSIDLRGIEIDPIGRIYLNFAELEFTDFSSLMAEIRRISGVTDVRTVPWMPSEREHLALSALLEALPEPVLSLDMKSKVEMANPASCQLFAQSQERMRHHTAAQLINGFNFQRWLDGNPQSSHNEHVVINGQNFLMEITPVHLQNENDEYVLTGAVVMLRSTIRMGQQLQNLSTQDLSAFSQIIAVSAKMKHVVEQARKLAMLSAPLLITGDTGTGKDLFAYACHQASPRSAKPYLALNCASIPEDAVESELFGHAPEGKKGFFEQANGGSVLLDEIGEMSPRMQAKLLRFLNDGTFRRVGEDHEIHVDVRVICATQKNLVELVQKGLFREDLYYRLNVLTLNLPPLRDCPQDIMPLTELFVARFADEQGVPRPKLSADLSTVLTRYGWPGNVRQLKNAIYRALTQLEGYELRPQDILLPDYDAATVAVGEDAMEGSLDDITSRFERSVLTQLYRSYPSTRKLAKRLGVSHTAIANKLREYGLSQKKGEE</sequence>
<organism>
    <name type="scientific">Salmonella typhi</name>
    <dbReference type="NCBI Taxonomy" id="90370"/>
    <lineage>
        <taxon>Bacteria</taxon>
        <taxon>Pseudomonadati</taxon>
        <taxon>Pseudomonadota</taxon>
        <taxon>Gammaproteobacteria</taxon>
        <taxon>Enterobacterales</taxon>
        <taxon>Enterobacteriaceae</taxon>
        <taxon>Salmonella</taxon>
    </lineage>
</organism>
<gene>
    <name type="primary">tyrR</name>
    <name type="ordered locus">STY1378</name>
    <name type="ordered locus">t1588</name>
</gene>
<dbReference type="EMBL" id="AL513382">
    <property type="protein sequence ID" value="CAD01646.1"/>
    <property type="molecule type" value="Genomic_DNA"/>
</dbReference>
<dbReference type="EMBL" id="AE014613">
    <property type="protein sequence ID" value="AAO69219.1"/>
    <property type="molecule type" value="Genomic_DNA"/>
</dbReference>
<dbReference type="RefSeq" id="NP_455820.1">
    <property type="nucleotide sequence ID" value="NC_003198.1"/>
</dbReference>
<dbReference type="RefSeq" id="WP_001235493.1">
    <property type="nucleotide sequence ID" value="NZ_WSUR01000006.1"/>
</dbReference>
<dbReference type="SMR" id="P0A2D8"/>
<dbReference type="STRING" id="220341.gene:17585336"/>
<dbReference type="KEGG" id="stt:t1588"/>
<dbReference type="KEGG" id="sty:STY1378"/>
<dbReference type="PATRIC" id="fig|220341.7.peg.1387"/>
<dbReference type="eggNOG" id="COG3283">
    <property type="taxonomic scope" value="Bacteria"/>
</dbReference>
<dbReference type="HOGENOM" id="CLU_000445_8_2_6"/>
<dbReference type="OMA" id="CQNRIGI"/>
<dbReference type="OrthoDB" id="9804019at2"/>
<dbReference type="Proteomes" id="UP000000541">
    <property type="component" value="Chromosome"/>
</dbReference>
<dbReference type="Proteomes" id="UP000002670">
    <property type="component" value="Chromosome"/>
</dbReference>
<dbReference type="GO" id="GO:0005737">
    <property type="term" value="C:cytoplasm"/>
    <property type="evidence" value="ECO:0007669"/>
    <property type="project" value="UniProtKB-SubCell"/>
</dbReference>
<dbReference type="GO" id="GO:0005524">
    <property type="term" value="F:ATP binding"/>
    <property type="evidence" value="ECO:0007669"/>
    <property type="project" value="UniProtKB-KW"/>
</dbReference>
<dbReference type="GO" id="GO:0016887">
    <property type="term" value="F:ATP hydrolysis activity"/>
    <property type="evidence" value="ECO:0007669"/>
    <property type="project" value="InterPro"/>
</dbReference>
<dbReference type="GO" id="GO:0003677">
    <property type="term" value="F:DNA binding"/>
    <property type="evidence" value="ECO:0007669"/>
    <property type="project" value="UniProtKB-KW"/>
</dbReference>
<dbReference type="GO" id="GO:0009056">
    <property type="term" value="P:catabolic process"/>
    <property type="evidence" value="ECO:0007669"/>
    <property type="project" value="UniProtKB-KW"/>
</dbReference>
<dbReference type="GO" id="GO:0006355">
    <property type="term" value="P:regulation of DNA-templated transcription"/>
    <property type="evidence" value="ECO:0007669"/>
    <property type="project" value="InterPro"/>
</dbReference>
<dbReference type="CDD" id="cd00009">
    <property type="entry name" value="AAA"/>
    <property type="match status" value="1"/>
</dbReference>
<dbReference type="CDD" id="cd04877">
    <property type="entry name" value="ACT_TyrR"/>
    <property type="match status" value="1"/>
</dbReference>
<dbReference type="CDD" id="cd00130">
    <property type="entry name" value="PAS"/>
    <property type="match status" value="1"/>
</dbReference>
<dbReference type="FunFam" id="3.40.50.300:FF:000006">
    <property type="entry name" value="DNA-binding transcriptional regulator NtrC"/>
    <property type="match status" value="1"/>
</dbReference>
<dbReference type="FunFam" id="1.10.10.60:FF:000112">
    <property type="entry name" value="TyrR family transcriptional regulator"/>
    <property type="match status" value="1"/>
</dbReference>
<dbReference type="FunFam" id="3.30.70.260:FF:000013">
    <property type="entry name" value="TyrR family transcriptional regulator"/>
    <property type="match status" value="1"/>
</dbReference>
<dbReference type="Gene3D" id="1.10.8.60">
    <property type="match status" value="1"/>
</dbReference>
<dbReference type="Gene3D" id="3.30.70.260">
    <property type="match status" value="1"/>
</dbReference>
<dbReference type="Gene3D" id="1.10.10.60">
    <property type="entry name" value="Homeodomain-like"/>
    <property type="match status" value="1"/>
</dbReference>
<dbReference type="Gene3D" id="3.40.50.300">
    <property type="entry name" value="P-loop containing nucleotide triphosphate hydrolases"/>
    <property type="match status" value="1"/>
</dbReference>
<dbReference type="Gene3D" id="3.30.450.20">
    <property type="entry name" value="PAS domain"/>
    <property type="match status" value="1"/>
</dbReference>
<dbReference type="InterPro" id="IPR003593">
    <property type="entry name" value="AAA+_ATPase"/>
</dbReference>
<dbReference type="InterPro" id="IPR045865">
    <property type="entry name" value="ACT-like_dom_sf"/>
</dbReference>
<dbReference type="InterPro" id="IPR002912">
    <property type="entry name" value="ACT_dom"/>
</dbReference>
<dbReference type="InterPro" id="IPR009057">
    <property type="entry name" value="Homeodomain-like_sf"/>
</dbReference>
<dbReference type="InterPro" id="IPR030828">
    <property type="entry name" value="HTH_TyrR"/>
</dbReference>
<dbReference type="InterPro" id="IPR027417">
    <property type="entry name" value="P-loop_NTPase"/>
</dbReference>
<dbReference type="InterPro" id="IPR000014">
    <property type="entry name" value="PAS"/>
</dbReference>
<dbReference type="InterPro" id="IPR035965">
    <property type="entry name" value="PAS-like_dom_sf"/>
</dbReference>
<dbReference type="InterPro" id="IPR002078">
    <property type="entry name" value="Sigma_54_int"/>
</dbReference>
<dbReference type="InterPro" id="IPR025662">
    <property type="entry name" value="Sigma_54_int_dom_ATP-bd_1"/>
</dbReference>
<dbReference type="InterPro" id="IPR025943">
    <property type="entry name" value="Sigma_54_int_dom_ATP-bd_2"/>
</dbReference>
<dbReference type="InterPro" id="IPR025944">
    <property type="entry name" value="Sigma_54_int_dom_CS"/>
</dbReference>
<dbReference type="NCBIfam" id="TIGR04381">
    <property type="entry name" value="HTH_TypR"/>
    <property type="match status" value="1"/>
</dbReference>
<dbReference type="NCBIfam" id="NF008085">
    <property type="entry name" value="PRK10820.1"/>
    <property type="match status" value="1"/>
</dbReference>
<dbReference type="PANTHER" id="PTHR32071:SF3">
    <property type="entry name" value="HTH-TYPE TRANSCRIPTIONAL REGULATORY PROTEIN TYRR"/>
    <property type="match status" value="1"/>
</dbReference>
<dbReference type="PANTHER" id="PTHR32071">
    <property type="entry name" value="TRANSCRIPTIONAL REGULATORY PROTEIN"/>
    <property type="match status" value="1"/>
</dbReference>
<dbReference type="Pfam" id="PF18024">
    <property type="entry name" value="HTH_50"/>
    <property type="match status" value="1"/>
</dbReference>
<dbReference type="Pfam" id="PF00158">
    <property type="entry name" value="Sigma54_activat"/>
    <property type="match status" value="1"/>
</dbReference>
<dbReference type="SMART" id="SM00382">
    <property type="entry name" value="AAA"/>
    <property type="match status" value="1"/>
</dbReference>
<dbReference type="SMART" id="SM00091">
    <property type="entry name" value="PAS"/>
    <property type="match status" value="1"/>
</dbReference>
<dbReference type="SUPFAM" id="SSF55021">
    <property type="entry name" value="ACT-like"/>
    <property type="match status" value="1"/>
</dbReference>
<dbReference type="SUPFAM" id="SSF46689">
    <property type="entry name" value="Homeodomain-like"/>
    <property type="match status" value="1"/>
</dbReference>
<dbReference type="SUPFAM" id="SSF52540">
    <property type="entry name" value="P-loop containing nucleoside triphosphate hydrolases"/>
    <property type="match status" value="1"/>
</dbReference>
<dbReference type="SUPFAM" id="SSF55785">
    <property type="entry name" value="PYP-like sensor domain (PAS domain)"/>
    <property type="match status" value="1"/>
</dbReference>
<dbReference type="PROSITE" id="PS51671">
    <property type="entry name" value="ACT"/>
    <property type="match status" value="1"/>
</dbReference>
<dbReference type="PROSITE" id="PS00675">
    <property type="entry name" value="SIGMA54_INTERACT_1"/>
    <property type="match status" value="1"/>
</dbReference>
<dbReference type="PROSITE" id="PS00676">
    <property type="entry name" value="SIGMA54_INTERACT_2"/>
    <property type="match status" value="1"/>
</dbReference>
<dbReference type="PROSITE" id="PS00688">
    <property type="entry name" value="SIGMA54_INTERACT_3"/>
    <property type="match status" value="1"/>
</dbReference>
<dbReference type="PROSITE" id="PS50045">
    <property type="entry name" value="SIGMA54_INTERACT_4"/>
    <property type="match status" value="1"/>
</dbReference>
<reference key="1">
    <citation type="journal article" date="2001" name="Nature">
        <title>Complete genome sequence of a multiple drug resistant Salmonella enterica serovar Typhi CT18.</title>
        <authorList>
            <person name="Parkhill J."/>
            <person name="Dougan G."/>
            <person name="James K.D."/>
            <person name="Thomson N.R."/>
            <person name="Pickard D."/>
            <person name="Wain J."/>
            <person name="Churcher C.M."/>
            <person name="Mungall K.L."/>
            <person name="Bentley S.D."/>
            <person name="Holden M.T.G."/>
            <person name="Sebaihia M."/>
            <person name="Baker S."/>
            <person name="Basham D."/>
            <person name="Brooks K."/>
            <person name="Chillingworth T."/>
            <person name="Connerton P."/>
            <person name="Cronin A."/>
            <person name="Davis P."/>
            <person name="Davies R.M."/>
            <person name="Dowd L."/>
            <person name="White N."/>
            <person name="Farrar J."/>
            <person name="Feltwell T."/>
            <person name="Hamlin N."/>
            <person name="Haque A."/>
            <person name="Hien T.T."/>
            <person name="Holroyd S."/>
            <person name="Jagels K."/>
            <person name="Krogh A."/>
            <person name="Larsen T.S."/>
            <person name="Leather S."/>
            <person name="Moule S."/>
            <person name="O'Gaora P."/>
            <person name="Parry C."/>
            <person name="Quail M.A."/>
            <person name="Rutherford K.M."/>
            <person name="Simmonds M."/>
            <person name="Skelton J."/>
            <person name="Stevens K."/>
            <person name="Whitehead S."/>
            <person name="Barrell B.G."/>
        </authorList>
    </citation>
    <scope>NUCLEOTIDE SEQUENCE [LARGE SCALE GENOMIC DNA]</scope>
    <source>
        <strain>CT18</strain>
    </source>
</reference>
<reference key="2">
    <citation type="journal article" date="2003" name="J. Bacteriol.">
        <title>Comparative genomics of Salmonella enterica serovar Typhi strains Ty2 and CT18.</title>
        <authorList>
            <person name="Deng W."/>
            <person name="Liou S.-R."/>
            <person name="Plunkett G. III"/>
            <person name="Mayhew G.F."/>
            <person name="Rose D.J."/>
            <person name="Burland V."/>
            <person name="Kodoyianni V."/>
            <person name="Schwartz D.C."/>
            <person name="Blattner F.R."/>
        </authorList>
    </citation>
    <scope>NUCLEOTIDE SEQUENCE [LARGE SCALE GENOMIC DNA]</scope>
    <source>
        <strain>ATCC 700931 / Ty2</strain>
    </source>
</reference>
<feature type="chain" id="PRO_0000081341" description="HTH-type transcriptional regulatory protein TyrR">
    <location>
        <begin position="1"/>
        <end position="513"/>
    </location>
</feature>
<feature type="domain" description="ACT" evidence="4">
    <location>
        <begin position="2"/>
        <end position="72"/>
    </location>
</feature>
<feature type="domain" description="PAS" evidence="2">
    <location>
        <begin position="78"/>
        <end position="120"/>
    </location>
</feature>
<feature type="domain" description="Sigma-54 factor interaction" evidence="3">
    <location>
        <begin position="206"/>
        <end position="428"/>
    </location>
</feature>
<feature type="DNA-binding region" description="H-T-H motif" evidence="1">
    <location>
        <begin position="482"/>
        <end position="502"/>
    </location>
</feature>
<feature type="binding site" evidence="3">
    <location>
        <begin position="234"/>
        <end position="241"/>
    </location>
    <ligand>
        <name>ATP</name>
        <dbReference type="ChEBI" id="CHEBI:30616"/>
    </ligand>
</feature>
<feature type="binding site" evidence="3">
    <location>
        <begin position="290"/>
        <end position="299"/>
    </location>
    <ligand>
        <name>ATP</name>
        <dbReference type="ChEBI" id="CHEBI:30616"/>
    </ligand>
</feature>
<evidence type="ECO:0000250" key="1">
    <source>
        <dbReference type="UniProtKB" id="P07604"/>
    </source>
</evidence>
<evidence type="ECO:0000255" key="2">
    <source>
        <dbReference type="PROSITE-ProRule" id="PRU00140"/>
    </source>
</evidence>
<evidence type="ECO:0000255" key="3">
    <source>
        <dbReference type="PROSITE-ProRule" id="PRU00193"/>
    </source>
</evidence>
<evidence type="ECO:0000255" key="4">
    <source>
        <dbReference type="PROSITE-ProRule" id="PRU01007"/>
    </source>
</evidence>
<comment type="function">
    <text evidence="1">Dual transcriptional regulator of the TyrR regulon, which includes a number of genes coding for proteins involved in the biosynthesis or transport of the three aromatic amino acids, phenylalanine, tyrosine and tryptophan. These three aromatic amino acids act as effectors which bind to the TyrR protein to form an active regulatory protein. Acts by binding specifically to TyrR boxes in the promoter region of the target genes.</text>
</comment>
<comment type="subunit">
    <text evidence="1">Homodimer. In presence of tyrosine (or high concentrations of phenylalanine or tryptophan) and ATP, it self-associates to form an hexamer.</text>
</comment>
<comment type="subcellular location">
    <subcellularLocation>
        <location evidence="1">Cytoplasm</location>
    </subcellularLocation>
</comment>
<proteinExistence type="inferred from homology"/>
<protein>
    <recommendedName>
        <fullName evidence="1">HTH-type transcriptional regulatory protein TyrR</fullName>
    </recommendedName>
</protein>
<name>TYRR_SALTI</name>
<keyword id="KW-0010">Activator</keyword>
<keyword id="KW-0058">Aromatic hydrocarbons catabolism</keyword>
<keyword id="KW-0067">ATP-binding</keyword>
<keyword id="KW-0963">Cytoplasm</keyword>
<keyword id="KW-0238">DNA-binding</keyword>
<keyword id="KW-0547">Nucleotide-binding</keyword>
<keyword id="KW-0678">Repressor</keyword>
<keyword id="KW-0804">Transcription</keyword>
<keyword id="KW-0805">Transcription regulation</keyword>